<protein>
    <recommendedName>
        <fullName evidence="1">D-alanyl carrier protein</fullName>
        <shortName evidence="1">DCP</shortName>
    </recommendedName>
    <alternativeName>
        <fullName evidence="1">D-alanine--poly(phosphoribitol) ligase subunit 2</fullName>
    </alternativeName>
</protein>
<accession>A4VU17</accession>
<reference key="1">
    <citation type="journal article" date="2007" name="PLoS ONE">
        <title>A glimpse of streptococcal toxic shock syndrome from comparative genomics of S. suis 2 Chinese isolates.</title>
        <authorList>
            <person name="Chen C."/>
            <person name="Tang J."/>
            <person name="Dong W."/>
            <person name="Wang C."/>
            <person name="Feng Y."/>
            <person name="Wang J."/>
            <person name="Zheng F."/>
            <person name="Pan X."/>
            <person name="Liu D."/>
            <person name="Li M."/>
            <person name="Song Y."/>
            <person name="Zhu X."/>
            <person name="Sun H."/>
            <person name="Feng T."/>
            <person name="Guo Z."/>
            <person name="Ju A."/>
            <person name="Ge J."/>
            <person name="Dong Y."/>
            <person name="Sun W."/>
            <person name="Jiang Y."/>
            <person name="Wang J."/>
            <person name="Yan J."/>
            <person name="Yang H."/>
            <person name="Wang X."/>
            <person name="Gao G.F."/>
            <person name="Yang R."/>
            <person name="Wang J."/>
            <person name="Yu J."/>
        </authorList>
    </citation>
    <scope>NUCLEOTIDE SEQUENCE [LARGE SCALE GENOMIC DNA]</scope>
    <source>
        <strain>05ZYH33</strain>
    </source>
</reference>
<dbReference type="EMBL" id="CP000407">
    <property type="protein sequence ID" value="ABP89606.1"/>
    <property type="molecule type" value="Genomic_DNA"/>
</dbReference>
<dbReference type="SMR" id="A4VU17"/>
<dbReference type="STRING" id="391295.SSU05_0640"/>
<dbReference type="KEGG" id="ssu:SSU05_0640"/>
<dbReference type="eggNOG" id="COG0236">
    <property type="taxonomic scope" value="Bacteria"/>
</dbReference>
<dbReference type="HOGENOM" id="CLU_108696_19_0_9"/>
<dbReference type="UniPathway" id="UPA00556"/>
<dbReference type="GO" id="GO:0005737">
    <property type="term" value="C:cytoplasm"/>
    <property type="evidence" value="ECO:0007669"/>
    <property type="project" value="UniProtKB-SubCell"/>
</dbReference>
<dbReference type="GO" id="GO:0036370">
    <property type="term" value="F:D-alanyl carrier activity"/>
    <property type="evidence" value="ECO:0007669"/>
    <property type="project" value="UniProtKB-UniRule"/>
</dbReference>
<dbReference type="GO" id="GO:0071555">
    <property type="term" value="P:cell wall organization"/>
    <property type="evidence" value="ECO:0007669"/>
    <property type="project" value="UniProtKB-KW"/>
</dbReference>
<dbReference type="GO" id="GO:0070395">
    <property type="term" value="P:lipoteichoic acid biosynthetic process"/>
    <property type="evidence" value="ECO:0007669"/>
    <property type="project" value="UniProtKB-UniRule"/>
</dbReference>
<dbReference type="Gene3D" id="1.10.1200.10">
    <property type="entry name" value="ACP-like"/>
    <property type="match status" value="1"/>
</dbReference>
<dbReference type="HAMAP" id="MF_00565">
    <property type="entry name" value="DltC"/>
    <property type="match status" value="1"/>
</dbReference>
<dbReference type="InterPro" id="IPR036736">
    <property type="entry name" value="ACP-like_sf"/>
</dbReference>
<dbReference type="InterPro" id="IPR003230">
    <property type="entry name" value="DltC"/>
</dbReference>
<dbReference type="InterPro" id="IPR009081">
    <property type="entry name" value="PP-bd_ACP"/>
</dbReference>
<dbReference type="NCBIfam" id="TIGR01688">
    <property type="entry name" value="dltC"/>
    <property type="match status" value="1"/>
</dbReference>
<dbReference type="NCBIfam" id="NF003464">
    <property type="entry name" value="PRK05087.1"/>
    <property type="match status" value="1"/>
</dbReference>
<dbReference type="Pfam" id="PF00550">
    <property type="entry name" value="PP-binding"/>
    <property type="match status" value="1"/>
</dbReference>
<dbReference type="SUPFAM" id="SSF47336">
    <property type="entry name" value="ACP-like"/>
    <property type="match status" value="1"/>
</dbReference>
<dbReference type="PROSITE" id="PS50075">
    <property type="entry name" value="CARRIER"/>
    <property type="match status" value="1"/>
</dbReference>
<comment type="function">
    <text evidence="1">Carrier protein involved in the D-alanylation of lipoteichoic acid (LTA). The loading of thioester-linked D-alanine onto DltC is catalyzed by D-alanine--D-alanyl carrier protein ligase DltA. The DltC-carried D-alanyl group is further transferred to cell membrane phosphatidylglycerol (PG) by forming an ester bond, probably catalyzed by DltD. D-alanylation of LTA plays an important role in modulating the properties of the cell wall in Gram-positive bacteria, influencing the net charge of the cell wall.</text>
</comment>
<comment type="pathway">
    <text evidence="1">Cell wall biogenesis; lipoteichoic acid biosynthesis.</text>
</comment>
<comment type="subcellular location">
    <subcellularLocation>
        <location evidence="1">Cytoplasm</location>
    </subcellularLocation>
</comment>
<comment type="PTM">
    <text evidence="1">4'-phosphopantetheine is transferred from CoA to a specific serine of apo-DCP.</text>
</comment>
<comment type="similarity">
    <text evidence="1">Belongs to the DltC family.</text>
</comment>
<feature type="chain" id="PRO_1000024936" description="D-alanyl carrier protein">
    <location>
        <begin position="1"/>
        <end position="79"/>
    </location>
</feature>
<feature type="domain" description="Carrier" evidence="1">
    <location>
        <begin position="1"/>
        <end position="77"/>
    </location>
</feature>
<feature type="modified residue" description="O-(pantetheine 4'-phosphoryl)serine" evidence="1">
    <location>
        <position position="35"/>
    </location>
</feature>
<evidence type="ECO:0000255" key="1">
    <source>
        <dbReference type="HAMAP-Rule" id="MF_00565"/>
    </source>
</evidence>
<name>DLTC_STRSY</name>
<keyword id="KW-0961">Cell wall biogenesis/degradation</keyword>
<keyword id="KW-0963">Cytoplasm</keyword>
<keyword id="KW-0596">Phosphopantetheine</keyword>
<keyword id="KW-0597">Phosphoprotein</keyword>
<proteinExistence type="inferred from homology"/>
<sequence length="79" mass="8952">MDVKETILNIIEELFMEDVSEMMDEDLFDAGVLDSMGTVELIVELESRFNITVPVSEFGREDWNTANKIISGVVELMHA</sequence>
<gene>
    <name evidence="1" type="primary">dltC</name>
    <name type="ordered locus">SSU05_0640</name>
</gene>
<organism>
    <name type="scientific">Streptococcus suis (strain 05ZYH33)</name>
    <dbReference type="NCBI Taxonomy" id="391295"/>
    <lineage>
        <taxon>Bacteria</taxon>
        <taxon>Bacillati</taxon>
        <taxon>Bacillota</taxon>
        <taxon>Bacilli</taxon>
        <taxon>Lactobacillales</taxon>
        <taxon>Streptococcaceae</taxon>
        <taxon>Streptococcus</taxon>
    </lineage>
</organism>